<dbReference type="EMBL" id="J02509">
    <property type="protein sequence ID" value="AAA32513.1"/>
    <property type="molecule type" value="Genomic_DNA"/>
</dbReference>
<dbReference type="EMBL" id="AF158101">
    <property type="protein sequence ID" value="AAD42459.1"/>
    <property type="molecule type" value="Genomic_DNA"/>
</dbReference>
<dbReference type="PIR" id="A04368">
    <property type="entry name" value="TLBP64"/>
</dbReference>
<dbReference type="RefSeq" id="NP_049862.1">
    <property type="nucleotide sequence ID" value="NC_000866.4"/>
</dbReference>
<dbReference type="GeneID" id="1258790"/>
<dbReference type="KEGG" id="vg:1258790"/>
<dbReference type="OrthoDB" id="10867at10239"/>
<dbReference type="Proteomes" id="UP000009087">
    <property type="component" value="Segment"/>
</dbReference>
<dbReference type="GO" id="GO:0098024">
    <property type="term" value="C:virus tail, fiber"/>
    <property type="evidence" value="ECO:0007669"/>
    <property type="project" value="UniProtKB-KW"/>
</dbReference>
<dbReference type="GO" id="GO:0098671">
    <property type="term" value="P:adhesion receptor-mediated virion attachment to host cell"/>
    <property type="evidence" value="ECO:0007669"/>
    <property type="project" value="UniProtKB-KW"/>
</dbReference>
<dbReference type="GO" id="GO:0046718">
    <property type="term" value="P:symbiont entry into host cell"/>
    <property type="evidence" value="ECO:0007669"/>
    <property type="project" value="UniProtKB-KW"/>
</dbReference>
<dbReference type="InterPro" id="IPR005601">
    <property type="entry name" value="Tail_fibre_p36"/>
</dbReference>
<dbReference type="Pfam" id="PF03903">
    <property type="entry name" value="Phage_T4_gp36"/>
    <property type="match status" value="1"/>
</dbReference>
<accession>P03743</accession>
<protein>
    <recommendedName>
        <fullName>Long-tail fiber protein gp36</fullName>
    </recommendedName>
    <alternativeName>
        <fullName evidence="2">Gene product 36</fullName>
        <shortName>gp36</shortName>
    </alternativeName>
</protein>
<organismHost>
    <name type="scientific">Escherichia coli</name>
    <dbReference type="NCBI Taxonomy" id="562"/>
</organismHost>
<sequence>MADLKVGSTTGGSVIWHQGNFPLNPAGDDVLYKSFKIYSEYNKPQAADNDFVSKANGGTYASKVTFNAGIQVPYAPNIMSPCGIYGGNGDGATFDKANIDIVSWYGVGFKSSFGSTGRTVVINTRNGDINTKGVVSAAGQVRSGAAAPIAANDLTRKDYVDGAINTVTANANSRVLRSGDTMTGNLTAPNFFSQNPASQPSHVPRFDQIVIKDSVQDFGYY</sequence>
<gene>
    <name type="primary">36</name>
</gene>
<feature type="chain" id="PRO_0000165022" description="Long-tail fiber protein gp36">
    <location>
        <begin position="1"/>
        <end position="221"/>
    </location>
</feature>
<reference key="1">
    <citation type="journal article" date="1981" name="J. Mol. Biol.">
        <title>DNA sequence of the tail fibre genes 36 and 37 of bacteriophage T4.</title>
        <authorList>
            <person name="Oliver D.B."/>
            <person name="Crowther R.A."/>
        </authorList>
    </citation>
    <scope>NUCLEOTIDE SEQUENCE [GENOMIC DNA]</scope>
</reference>
<reference key="2">
    <citation type="journal article" date="2003" name="Microbiol. Mol. Biol. Rev.">
        <title>Bacteriophage T4 genome.</title>
        <authorList>
            <person name="Miller E.S."/>
            <person name="Kutter E."/>
            <person name="Mosig G."/>
            <person name="Arisaka F."/>
            <person name="Kunisawa T."/>
            <person name="Ruger W."/>
        </authorList>
    </citation>
    <scope>NUCLEOTIDE SEQUENCE [LARGE SCALE GENOMIC DNA]</scope>
</reference>
<reference key="3">
    <citation type="journal article" date="1996" name="J. Mol. Biol.">
        <title>Stoichiometry and domainal organization of the long tail-fiber of bacteriophage T4: a hinged viral adhesin.</title>
        <authorList>
            <person name="Cerritelli M.E."/>
            <person name="Wall J.S."/>
            <person name="Simon M.N."/>
            <person name="Conway J.F."/>
            <person name="Steven A.C."/>
        </authorList>
    </citation>
    <scope>FUNCTION</scope>
    <scope>SUBUNIT</scope>
</reference>
<evidence type="ECO:0000269" key="1">
    <source>
    </source>
</evidence>
<evidence type="ECO:0000305" key="2"/>
<keyword id="KW-0945">Host-virus interaction</keyword>
<keyword id="KW-0426">Late protein</keyword>
<keyword id="KW-1185">Reference proteome</keyword>
<keyword id="KW-1233">Viral attachment to host adhesion receptor</keyword>
<keyword id="KW-1161">Viral attachment to host cell</keyword>
<keyword id="KW-1230">Viral tail fiber protein</keyword>
<keyword id="KW-1227">Viral tail protein</keyword>
<keyword id="KW-0946">Virion</keyword>
<keyword id="KW-1160">Virus entry into host cell</keyword>
<name>FIB36_BPT4</name>
<proteinExistence type="evidence at protein level"/>
<comment type="function">
    <text evidence="1">Structural component of the distal-half of the long-tail fiber. The long-tail fiber of T4 is about 1600 Angstroms long with a kink in the middle that divides the fiber into proximal and distal halves. The thin tip of the distal half-fiber interacts with the bacterial lipopolysaccharide receptor and specifies the host range of the phage.</text>
</comment>
<comment type="subunit">
    <text evidence="1">The long-tail fibers are trimeric, with a stoichiometry of gp34/gp37/gp36/gp35 of 3:3:3:1.</text>
</comment>
<comment type="subcellular location">
    <subcellularLocation>
        <location evidence="2">Virion</location>
    </subcellularLocation>
</comment>
<comment type="similarity">
    <text evidence="2">Belongs to the tevenvirinae tail fiber protein p36 family.</text>
</comment>
<organism>
    <name type="scientific">Enterobacteria phage T4</name>
    <name type="common">Bacteriophage T4</name>
    <dbReference type="NCBI Taxonomy" id="10665"/>
    <lineage>
        <taxon>Viruses</taxon>
        <taxon>Duplodnaviria</taxon>
        <taxon>Heunggongvirae</taxon>
        <taxon>Uroviricota</taxon>
        <taxon>Caudoviricetes</taxon>
        <taxon>Straboviridae</taxon>
        <taxon>Tevenvirinae</taxon>
        <taxon>Tequatrovirus</taxon>
    </lineage>
</organism>